<evidence type="ECO:0000255" key="1">
    <source>
        <dbReference type="HAMAP-Rule" id="MF_00373"/>
    </source>
</evidence>
<evidence type="ECO:0000256" key="2">
    <source>
        <dbReference type="SAM" id="MobiDB-lite"/>
    </source>
</evidence>
<evidence type="ECO:0000305" key="3"/>
<reference key="1">
    <citation type="journal article" date="2002" name="Environ. Microbiol.">
        <title>Complete genome sequence and comparative analysis of the metabolically versatile Pseudomonas putida KT2440.</title>
        <authorList>
            <person name="Nelson K.E."/>
            <person name="Weinel C."/>
            <person name="Paulsen I.T."/>
            <person name="Dodson R.J."/>
            <person name="Hilbert H."/>
            <person name="Martins dos Santos V.A.P."/>
            <person name="Fouts D.E."/>
            <person name="Gill S.R."/>
            <person name="Pop M."/>
            <person name="Holmes M."/>
            <person name="Brinkac L.M."/>
            <person name="Beanan M.J."/>
            <person name="DeBoy R.T."/>
            <person name="Daugherty S.C."/>
            <person name="Kolonay J.F."/>
            <person name="Madupu R."/>
            <person name="Nelson W.C."/>
            <person name="White O."/>
            <person name="Peterson J.D."/>
            <person name="Khouri H.M."/>
            <person name="Hance I."/>
            <person name="Chris Lee P."/>
            <person name="Holtzapple E.K."/>
            <person name="Scanlan D."/>
            <person name="Tran K."/>
            <person name="Moazzez A."/>
            <person name="Utterback T.R."/>
            <person name="Rizzo M."/>
            <person name="Lee K."/>
            <person name="Kosack D."/>
            <person name="Moestl D."/>
            <person name="Wedler H."/>
            <person name="Lauber J."/>
            <person name="Stjepandic D."/>
            <person name="Hoheisel J."/>
            <person name="Straetz M."/>
            <person name="Heim S."/>
            <person name="Kiewitz C."/>
            <person name="Eisen J.A."/>
            <person name="Timmis K.N."/>
            <person name="Duesterhoeft A."/>
            <person name="Tuemmler B."/>
            <person name="Fraser C.M."/>
        </authorList>
    </citation>
    <scope>NUCLEOTIDE SEQUENCE [LARGE SCALE GENOMIC DNA]</scope>
    <source>
        <strain>ATCC 47054 / DSM 6125 / CFBP 8728 / NCIMB 11950 / KT2440</strain>
    </source>
</reference>
<feature type="chain" id="PRO_0000178532" description="Large ribosomal subunit protein bL28">
    <location>
        <begin position="1"/>
        <end position="78"/>
    </location>
</feature>
<feature type="region of interest" description="Disordered" evidence="2">
    <location>
        <begin position="1"/>
        <end position="20"/>
    </location>
</feature>
<gene>
    <name evidence="1" type="primary">rpmB</name>
    <name type="ordered locus">PP_5282</name>
</gene>
<keyword id="KW-1185">Reference proteome</keyword>
<keyword id="KW-0687">Ribonucleoprotein</keyword>
<keyword id="KW-0689">Ribosomal protein</keyword>
<name>RL28_PSEPK</name>
<proteinExistence type="inferred from homology"/>
<protein>
    <recommendedName>
        <fullName evidence="1">Large ribosomal subunit protein bL28</fullName>
    </recommendedName>
    <alternativeName>
        <fullName evidence="3">50S ribosomal protein L28</fullName>
    </alternativeName>
</protein>
<dbReference type="EMBL" id="AE015451">
    <property type="protein sequence ID" value="AAN70847.1"/>
    <property type="molecule type" value="Genomic_DNA"/>
</dbReference>
<dbReference type="RefSeq" id="NP_747383.1">
    <property type="nucleotide sequence ID" value="NC_002947.4"/>
</dbReference>
<dbReference type="RefSeq" id="WP_003253504.1">
    <property type="nucleotide sequence ID" value="NZ_CP169744.1"/>
</dbReference>
<dbReference type="SMR" id="Q88C99"/>
<dbReference type="STRING" id="160488.PP_5282"/>
<dbReference type="PaxDb" id="160488-PP_5282"/>
<dbReference type="GeneID" id="93444363"/>
<dbReference type="KEGG" id="ppu:PP_5282"/>
<dbReference type="PATRIC" id="fig|160488.4.peg.5635"/>
<dbReference type="eggNOG" id="COG0227">
    <property type="taxonomic scope" value="Bacteria"/>
</dbReference>
<dbReference type="HOGENOM" id="CLU_064548_3_1_6"/>
<dbReference type="OrthoDB" id="9805609at2"/>
<dbReference type="PhylomeDB" id="Q88C99"/>
<dbReference type="BioCyc" id="PPUT160488:G1G01-5640-MONOMER"/>
<dbReference type="Proteomes" id="UP000000556">
    <property type="component" value="Chromosome"/>
</dbReference>
<dbReference type="GO" id="GO:0022625">
    <property type="term" value="C:cytosolic large ribosomal subunit"/>
    <property type="evidence" value="ECO:0007669"/>
    <property type="project" value="TreeGrafter"/>
</dbReference>
<dbReference type="GO" id="GO:0003735">
    <property type="term" value="F:structural constituent of ribosome"/>
    <property type="evidence" value="ECO:0007669"/>
    <property type="project" value="InterPro"/>
</dbReference>
<dbReference type="GO" id="GO:0006412">
    <property type="term" value="P:translation"/>
    <property type="evidence" value="ECO:0007669"/>
    <property type="project" value="UniProtKB-UniRule"/>
</dbReference>
<dbReference type="FunFam" id="2.30.170.40:FF:000001">
    <property type="entry name" value="50S ribosomal protein L28"/>
    <property type="match status" value="1"/>
</dbReference>
<dbReference type="Gene3D" id="2.30.170.40">
    <property type="entry name" value="Ribosomal protein L28/L24"/>
    <property type="match status" value="1"/>
</dbReference>
<dbReference type="HAMAP" id="MF_00373">
    <property type="entry name" value="Ribosomal_bL28"/>
    <property type="match status" value="1"/>
</dbReference>
<dbReference type="InterPro" id="IPR026569">
    <property type="entry name" value="Ribosomal_bL28"/>
</dbReference>
<dbReference type="InterPro" id="IPR034704">
    <property type="entry name" value="Ribosomal_bL28/bL31-like_sf"/>
</dbReference>
<dbReference type="InterPro" id="IPR001383">
    <property type="entry name" value="Ribosomal_bL28_bact-type"/>
</dbReference>
<dbReference type="InterPro" id="IPR037147">
    <property type="entry name" value="Ribosomal_bL28_sf"/>
</dbReference>
<dbReference type="NCBIfam" id="TIGR00009">
    <property type="entry name" value="L28"/>
    <property type="match status" value="1"/>
</dbReference>
<dbReference type="PANTHER" id="PTHR13528">
    <property type="entry name" value="39S RIBOSOMAL PROTEIN L28, MITOCHONDRIAL"/>
    <property type="match status" value="1"/>
</dbReference>
<dbReference type="PANTHER" id="PTHR13528:SF2">
    <property type="entry name" value="LARGE RIBOSOMAL SUBUNIT PROTEIN BL28M"/>
    <property type="match status" value="1"/>
</dbReference>
<dbReference type="Pfam" id="PF00830">
    <property type="entry name" value="Ribosomal_L28"/>
    <property type="match status" value="1"/>
</dbReference>
<dbReference type="SUPFAM" id="SSF143800">
    <property type="entry name" value="L28p-like"/>
    <property type="match status" value="1"/>
</dbReference>
<accession>Q88C99</accession>
<comment type="similarity">
    <text evidence="1">Belongs to the bacterial ribosomal protein bL28 family.</text>
</comment>
<organism>
    <name type="scientific">Pseudomonas putida (strain ATCC 47054 / DSM 6125 / CFBP 8728 / NCIMB 11950 / KT2440)</name>
    <dbReference type="NCBI Taxonomy" id="160488"/>
    <lineage>
        <taxon>Bacteria</taxon>
        <taxon>Pseudomonadati</taxon>
        <taxon>Pseudomonadota</taxon>
        <taxon>Gammaproteobacteria</taxon>
        <taxon>Pseudomonadales</taxon>
        <taxon>Pseudomonadaceae</taxon>
        <taxon>Pseudomonas</taxon>
    </lineage>
</organism>
<sequence length="78" mass="8922">MSRVCQVTGKGPVTGNNISHANNKTRRRFLPNLQHHRFWVESEKRFVRLRVSAKGMRIIDKRGIDAVLVDIRKAGAKV</sequence>